<accession>A1JME5</accession>
<proteinExistence type="inferred from homology"/>
<organism>
    <name type="scientific">Yersinia enterocolitica serotype O:8 / biotype 1B (strain NCTC 13174 / 8081)</name>
    <dbReference type="NCBI Taxonomy" id="393305"/>
    <lineage>
        <taxon>Bacteria</taxon>
        <taxon>Pseudomonadati</taxon>
        <taxon>Pseudomonadota</taxon>
        <taxon>Gammaproteobacteria</taxon>
        <taxon>Enterobacterales</taxon>
        <taxon>Yersiniaceae</taxon>
        <taxon>Yersinia</taxon>
    </lineage>
</organism>
<feature type="chain" id="PRO_1000064304" description="UPF0227 protein YE1706">
    <location>
        <begin position="1"/>
        <end position="180"/>
    </location>
</feature>
<gene>
    <name type="ordered locus">YE1706</name>
</gene>
<reference key="1">
    <citation type="journal article" date="2006" name="PLoS Genet.">
        <title>The complete genome sequence and comparative genome analysis of the high pathogenicity Yersinia enterocolitica strain 8081.</title>
        <authorList>
            <person name="Thomson N.R."/>
            <person name="Howard S."/>
            <person name="Wren B.W."/>
            <person name="Holden M.T.G."/>
            <person name="Crossman L."/>
            <person name="Challis G.L."/>
            <person name="Churcher C."/>
            <person name="Mungall K."/>
            <person name="Brooks K."/>
            <person name="Chillingworth T."/>
            <person name="Feltwell T."/>
            <person name="Abdellah Z."/>
            <person name="Hauser H."/>
            <person name="Jagels K."/>
            <person name="Maddison M."/>
            <person name="Moule S."/>
            <person name="Sanders M."/>
            <person name="Whitehead S."/>
            <person name="Quail M.A."/>
            <person name="Dougan G."/>
            <person name="Parkhill J."/>
            <person name="Prentice M.B."/>
        </authorList>
    </citation>
    <scope>NUCLEOTIDE SEQUENCE [LARGE SCALE GENOMIC DNA]</scope>
    <source>
        <strain>NCTC 13174 / 8081</strain>
    </source>
</reference>
<name>Y1706_YERE8</name>
<comment type="similarity">
    <text evidence="1">Belongs to the UPF0227 family.</text>
</comment>
<dbReference type="EMBL" id="AM286415">
    <property type="protein sequence ID" value="CAL11781.1"/>
    <property type="molecule type" value="Genomic_DNA"/>
</dbReference>
<dbReference type="RefSeq" id="YP_001005992.1">
    <property type="nucleotide sequence ID" value="NC_008800.1"/>
</dbReference>
<dbReference type="SMR" id="A1JME5"/>
<dbReference type="ESTHER" id="yerpe-y1616">
    <property type="family name" value="abh_upf00227"/>
</dbReference>
<dbReference type="KEGG" id="yen:YE1706"/>
<dbReference type="PATRIC" id="fig|393305.7.peg.1849"/>
<dbReference type="eggNOG" id="COG3150">
    <property type="taxonomic scope" value="Bacteria"/>
</dbReference>
<dbReference type="HOGENOM" id="CLU_128769_0_0_6"/>
<dbReference type="OrthoDB" id="6469735at2"/>
<dbReference type="Proteomes" id="UP000000642">
    <property type="component" value="Chromosome"/>
</dbReference>
<dbReference type="Gene3D" id="3.40.50.1820">
    <property type="entry name" value="alpha/beta hydrolase"/>
    <property type="match status" value="1"/>
</dbReference>
<dbReference type="HAMAP" id="MF_01047">
    <property type="entry name" value="UPF0227"/>
    <property type="match status" value="1"/>
</dbReference>
<dbReference type="InterPro" id="IPR029058">
    <property type="entry name" value="AB_hydrolase_fold"/>
</dbReference>
<dbReference type="InterPro" id="IPR022987">
    <property type="entry name" value="UPF0227"/>
</dbReference>
<dbReference type="InterPro" id="IPR008886">
    <property type="entry name" value="UPF0227/Esterase_YqiA"/>
</dbReference>
<dbReference type="NCBIfam" id="NF003431">
    <property type="entry name" value="PRK04940.1"/>
    <property type="match status" value="1"/>
</dbReference>
<dbReference type="PANTHER" id="PTHR35602">
    <property type="entry name" value="ESTERASE YQIA-RELATED"/>
    <property type="match status" value="1"/>
</dbReference>
<dbReference type="PANTHER" id="PTHR35602:SF2">
    <property type="entry name" value="UPF0227 PROTEIN YCFP"/>
    <property type="match status" value="1"/>
</dbReference>
<dbReference type="Pfam" id="PF05728">
    <property type="entry name" value="UPF0227"/>
    <property type="match status" value="1"/>
</dbReference>
<dbReference type="SUPFAM" id="SSF53474">
    <property type="entry name" value="alpha/beta-Hydrolases"/>
    <property type="match status" value="1"/>
</dbReference>
<evidence type="ECO:0000255" key="1">
    <source>
        <dbReference type="HAMAP-Rule" id="MF_01047"/>
    </source>
</evidence>
<protein>
    <recommendedName>
        <fullName evidence="1">UPF0227 protein YE1706</fullName>
    </recommendedName>
</protein>
<sequence length="180" mass="20676">MIVYLHGFDSNSPGNHEKVLQLQFIDPDVRFISYSTLHPRHDMQHLLKEVDKAIQQGGDAKSLICGVGLGGFWAERIGFLCGIRQVAFNPNLYPQDNMSGKIDRPEEYVDIASKCISDFREKNRDRCLVVLSRNDEMLDSKRTAGDLHPYYEIVWDEKQGHKFKDLSPHLQRIKAFKTLG</sequence>